<dbReference type="EC" id="3.1.3.11" evidence="1"/>
<dbReference type="EMBL" id="CP000083">
    <property type="protein sequence ID" value="AAZ25522.1"/>
    <property type="molecule type" value="Genomic_DNA"/>
</dbReference>
<dbReference type="RefSeq" id="WP_011045342.1">
    <property type="nucleotide sequence ID" value="NC_003910.7"/>
</dbReference>
<dbReference type="SMR" id="Q47VB1"/>
<dbReference type="STRING" id="167879.CPS_4614"/>
<dbReference type="KEGG" id="cps:CPS_4614"/>
<dbReference type="eggNOG" id="COG0158">
    <property type="taxonomic scope" value="Bacteria"/>
</dbReference>
<dbReference type="HOGENOM" id="CLU_039977_0_0_6"/>
<dbReference type="UniPathway" id="UPA00138"/>
<dbReference type="Proteomes" id="UP000000547">
    <property type="component" value="Chromosome"/>
</dbReference>
<dbReference type="GO" id="GO:0005829">
    <property type="term" value="C:cytosol"/>
    <property type="evidence" value="ECO:0007669"/>
    <property type="project" value="TreeGrafter"/>
</dbReference>
<dbReference type="GO" id="GO:0042132">
    <property type="term" value="F:fructose 1,6-bisphosphate 1-phosphatase activity"/>
    <property type="evidence" value="ECO:0007669"/>
    <property type="project" value="UniProtKB-UniRule"/>
</dbReference>
<dbReference type="GO" id="GO:0000287">
    <property type="term" value="F:magnesium ion binding"/>
    <property type="evidence" value="ECO:0007669"/>
    <property type="project" value="UniProtKB-UniRule"/>
</dbReference>
<dbReference type="GO" id="GO:0030388">
    <property type="term" value="P:fructose 1,6-bisphosphate metabolic process"/>
    <property type="evidence" value="ECO:0007669"/>
    <property type="project" value="TreeGrafter"/>
</dbReference>
<dbReference type="GO" id="GO:0006002">
    <property type="term" value="P:fructose 6-phosphate metabolic process"/>
    <property type="evidence" value="ECO:0007669"/>
    <property type="project" value="TreeGrafter"/>
</dbReference>
<dbReference type="GO" id="GO:0006000">
    <property type="term" value="P:fructose metabolic process"/>
    <property type="evidence" value="ECO:0007669"/>
    <property type="project" value="TreeGrafter"/>
</dbReference>
<dbReference type="GO" id="GO:0006094">
    <property type="term" value="P:gluconeogenesis"/>
    <property type="evidence" value="ECO:0007669"/>
    <property type="project" value="UniProtKB-UniRule"/>
</dbReference>
<dbReference type="GO" id="GO:0005986">
    <property type="term" value="P:sucrose biosynthetic process"/>
    <property type="evidence" value="ECO:0007669"/>
    <property type="project" value="TreeGrafter"/>
</dbReference>
<dbReference type="CDD" id="cd00354">
    <property type="entry name" value="FBPase"/>
    <property type="match status" value="1"/>
</dbReference>
<dbReference type="FunFam" id="3.40.190.80:FF:000011">
    <property type="entry name" value="Fructose-1,6-bisphosphatase class 1"/>
    <property type="match status" value="1"/>
</dbReference>
<dbReference type="Gene3D" id="3.40.190.80">
    <property type="match status" value="1"/>
</dbReference>
<dbReference type="Gene3D" id="3.30.540.10">
    <property type="entry name" value="Fructose-1,6-Bisphosphatase, subunit A, domain 1"/>
    <property type="match status" value="1"/>
</dbReference>
<dbReference type="HAMAP" id="MF_01855">
    <property type="entry name" value="FBPase_class1"/>
    <property type="match status" value="1"/>
</dbReference>
<dbReference type="InterPro" id="IPR044015">
    <property type="entry name" value="FBPase_C_dom"/>
</dbReference>
<dbReference type="InterPro" id="IPR000146">
    <property type="entry name" value="FBPase_class-1"/>
</dbReference>
<dbReference type="InterPro" id="IPR033391">
    <property type="entry name" value="FBPase_N"/>
</dbReference>
<dbReference type="InterPro" id="IPR028343">
    <property type="entry name" value="FBPtase"/>
</dbReference>
<dbReference type="NCBIfam" id="NF006779">
    <property type="entry name" value="PRK09293.1-3"/>
    <property type="match status" value="1"/>
</dbReference>
<dbReference type="NCBIfam" id="NF006780">
    <property type="entry name" value="PRK09293.1-4"/>
    <property type="match status" value="1"/>
</dbReference>
<dbReference type="PANTHER" id="PTHR11556">
    <property type="entry name" value="FRUCTOSE-1,6-BISPHOSPHATASE-RELATED"/>
    <property type="match status" value="1"/>
</dbReference>
<dbReference type="PANTHER" id="PTHR11556:SF35">
    <property type="entry name" value="SEDOHEPTULOSE-1,7-BISPHOSPHATASE, CHLOROPLASTIC"/>
    <property type="match status" value="1"/>
</dbReference>
<dbReference type="Pfam" id="PF00316">
    <property type="entry name" value="FBPase"/>
    <property type="match status" value="1"/>
</dbReference>
<dbReference type="Pfam" id="PF18913">
    <property type="entry name" value="FBPase_C"/>
    <property type="match status" value="1"/>
</dbReference>
<dbReference type="PIRSF" id="PIRSF500210">
    <property type="entry name" value="FBPtase"/>
    <property type="match status" value="1"/>
</dbReference>
<dbReference type="PIRSF" id="PIRSF000904">
    <property type="entry name" value="FBPtase_SBPase"/>
    <property type="match status" value="1"/>
</dbReference>
<dbReference type="PRINTS" id="PR00115">
    <property type="entry name" value="F16BPHPHTASE"/>
</dbReference>
<dbReference type="SUPFAM" id="SSF56655">
    <property type="entry name" value="Carbohydrate phosphatase"/>
    <property type="match status" value="1"/>
</dbReference>
<organism>
    <name type="scientific">Colwellia psychrerythraea (strain 34H / ATCC BAA-681)</name>
    <name type="common">Vibrio psychroerythus</name>
    <dbReference type="NCBI Taxonomy" id="167879"/>
    <lineage>
        <taxon>Bacteria</taxon>
        <taxon>Pseudomonadati</taxon>
        <taxon>Pseudomonadota</taxon>
        <taxon>Gammaproteobacteria</taxon>
        <taxon>Alteromonadales</taxon>
        <taxon>Colwelliaceae</taxon>
        <taxon>Colwellia</taxon>
    </lineage>
</organism>
<name>F16PA_COLP3</name>
<gene>
    <name evidence="1" type="primary">fbp</name>
    <name type="ordered locus">CPS_4614</name>
</gene>
<sequence length="322" mass="35707">MQRLAPALRQDNVPLDLISLIKTILAATKEISFRVSQGHLGDVMGSTLDENIQGEVQKQLDVVANELFKDILLESGFVKAISSEEEDHSVAGDENGKYIVSFDPLDGSSNIDINSLIGTIFSIHEAPKDIAAGDDDMFKQAGDKQVCAGYVLYGPSTMLVMTTGSGTHFYVLDRTHGGFLLVERNVQVPADTQEFAVNMSNQRFWQAPMQNYISDLLAGDTGPREKNFNMRWIAAMVGDIHRVLCRGGIFTYPADSRKPEQPYKLRLMYEANPMAFLLEQAGGLAMTSEGRIMDIEPNSIHQRVEVIMGSKNEVEKCLSYYN</sequence>
<accession>Q47VB1</accession>
<evidence type="ECO:0000255" key="1">
    <source>
        <dbReference type="HAMAP-Rule" id="MF_01855"/>
    </source>
</evidence>
<feature type="chain" id="PRO_0000364529" description="Fructose-1,6-bisphosphatase class 1">
    <location>
        <begin position="1"/>
        <end position="322"/>
    </location>
</feature>
<feature type="binding site" evidence="1">
    <location>
        <position position="84"/>
    </location>
    <ligand>
        <name>Mg(2+)</name>
        <dbReference type="ChEBI" id="CHEBI:18420"/>
        <label>1</label>
    </ligand>
</feature>
<feature type="binding site" evidence="1">
    <location>
        <position position="103"/>
    </location>
    <ligand>
        <name>Mg(2+)</name>
        <dbReference type="ChEBI" id="CHEBI:18420"/>
        <label>1</label>
    </ligand>
</feature>
<feature type="binding site" evidence="1">
    <location>
        <position position="103"/>
    </location>
    <ligand>
        <name>Mg(2+)</name>
        <dbReference type="ChEBI" id="CHEBI:18420"/>
        <label>2</label>
    </ligand>
</feature>
<feature type="binding site" evidence="1">
    <location>
        <position position="105"/>
    </location>
    <ligand>
        <name>Mg(2+)</name>
        <dbReference type="ChEBI" id="CHEBI:18420"/>
        <label>1</label>
    </ligand>
</feature>
<feature type="binding site" evidence="1">
    <location>
        <begin position="106"/>
        <end position="109"/>
    </location>
    <ligand>
        <name>substrate</name>
    </ligand>
</feature>
<feature type="binding site" evidence="1">
    <location>
        <position position="106"/>
    </location>
    <ligand>
        <name>Mg(2+)</name>
        <dbReference type="ChEBI" id="CHEBI:18420"/>
        <label>2</label>
    </ligand>
</feature>
<feature type="binding site" evidence="1">
    <location>
        <position position="198"/>
    </location>
    <ligand>
        <name>substrate</name>
    </ligand>
</feature>
<feature type="binding site" evidence="1">
    <location>
        <position position="264"/>
    </location>
    <ligand>
        <name>substrate</name>
    </ligand>
</feature>
<feature type="binding site" evidence="1">
    <location>
        <position position="270"/>
    </location>
    <ligand>
        <name>Mg(2+)</name>
        <dbReference type="ChEBI" id="CHEBI:18420"/>
        <label>2</label>
    </ligand>
</feature>
<reference key="1">
    <citation type="journal article" date="2005" name="Proc. Natl. Acad. Sci. U.S.A.">
        <title>The psychrophilic lifestyle as revealed by the genome sequence of Colwellia psychrerythraea 34H through genomic and proteomic analyses.</title>
        <authorList>
            <person name="Methe B.A."/>
            <person name="Nelson K.E."/>
            <person name="Deming J.W."/>
            <person name="Momen B."/>
            <person name="Melamud E."/>
            <person name="Zhang X."/>
            <person name="Moult J."/>
            <person name="Madupu R."/>
            <person name="Nelson W.C."/>
            <person name="Dodson R.J."/>
            <person name="Brinkac L.M."/>
            <person name="Daugherty S.C."/>
            <person name="Durkin A.S."/>
            <person name="DeBoy R.T."/>
            <person name="Kolonay J.F."/>
            <person name="Sullivan S.A."/>
            <person name="Zhou L."/>
            <person name="Davidsen T.M."/>
            <person name="Wu M."/>
            <person name="Huston A.L."/>
            <person name="Lewis M."/>
            <person name="Weaver B."/>
            <person name="Weidman J.F."/>
            <person name="Khouri H."/>
            <person name="Utterback T.R."/>
            <person name="Feldblyum T.V."/>
            <person name="Fraser C.M."/>
        </authorList>
    </citation>
    <scope>NUCLEOTIDE SEQUENCE [LARGE SCALE GENOMIC DNA]</scope>
    <source>
        <strain>34H / ATCC BAA-681</strain>
    </source>
</reference>
<comment type="catalytic activity">
    <reaction evidence="1">
        <text>beta-D-fructose 1,6-bisphosphate + H2O = beta-D-fructose 6-phosphate + phosphate</text>
        <dbReference type="Rhea" id="RHEA:11064"/>
        <dbReference type="ChEBI" id="CHEBI:15377"/>
        <dbReference type="ChEBI" id="CHEBI:32966"/>
        <dbReference type="ChEBI" id="CHEBI:43474"/>
        <dbReference type="ChEBI" id="CHEBI:57634"/>
        <dbReference type="EC" id="3.1.3.11"/>
    </reaction>
</comment>
<comment type="cofactor">
    <cofactor evidence="1">
        <name>Mg(2+)</name>
        <dbReference type="ChEBI" id="CHEBI:18420"/>
    </cofactor>
    <text evidence="1">Binds 2 magnesium ions per subunit.</text>
</comment>
<comment type="pathway">
    <text evidence="1">Carbohydrate biosynthesis; gluconeogenesis.</text>
</comment>
<comment type="subunit">
    <text evidence="1">Homotetramer.</text>
</comment>
<comment type="subcellular location">
    <subcellularLocation>
        <location evidence="1">Cytoplasm</location>
    </subcellularLocation>
</comment>
<comment type="similarity">
    <text evidence="1">Belongs to the FBPase class 1 family.</text>
</comment>
<proteinExistence type="inferred from homology"/>
<protein>
    <recommendedName>
        <fullName evidence="1">Fructose-1,6-bisphosphatase class 1</fullName>
        <shortName evidence="1">FBPase class 1</shortName>
        <ecNumber evidence="1">3.1.3.11</ecNumber>
    </recommendedName>
    <alternativeName>
        <fullName evidence="1">D-fructose-1,6-bisphosphate 1-phosphohydrolase class 1</fullName>
    </alternativeName>
</protein>
<keyword id="KW-0119">Carbohydrate metabolism</keyword>
<keyword id="KW-0963">Cytoplasm</keyword>
<keyword id="KW-0378">Hydrolase</keyword>
<keyword id="KW-0460">Magnesium</keyword>
<keyword id="KW-0479">Metal-binding</keyword>